<protein>
    <recommendedName>
        <fullName>Kunitz-type serine protease inhibitor ki-VN</fullName>
    </recommendedName>
</protein>
<name>VKT_VIPNI</name>
<reference key="1">
    <citation type="journal article" date="2011" name="Bioorg. Khim.">
        <title>Molecular cloning and analysis of cDNA sequences encoding serine proteinase and Kunitz type inhibitor in venom gland of Vipera nikolskii viper.</title>
        <authorList>
            <person name="Ramazanova A.S."/>
            <person name="Fil'kin S.I."/>
            <person name="Starkov V.G."/>
            <person name="Utkin I.N."/>
        </authorList>
    </citation>
    <scope>NUCLEOTIDE SEQUENCE [MRNA]</scope>
    <source>
        <tissue>Venom gland</tissue>
    </source>
</reference>
<sequence>MSSGGLLLLLGLLTLWAELTPVSSRDRPKFCYLPAEPGECNAYMPSFYYDSASNKCKKFIYGGCRGNANNFKTRDECHHTCVASGKGIQPRIGSN</sequence>
<evidence type="ECO:0000250" key="1"/>
<evidence type="ECO:0000255" key="2"/>
<evidence type="ECO:0000255" key="3">
    <source>
        <dbReference type="PROSITE-ProRule" id="PRU00031"/>
    </source>
</evidence>
<evidence type="ECO:0000305" key="4"/>
<proteinExistence type="evidence at transcript level"/>
<dbReference type="EMBL" id="FR669450">
    <property type="protein sequence ID" value="CBW30779.1"/>
    <property type="molecule type" value="mRNA"/>
</dbReference>
<dbReference type="SMR" id="E5AJX3"/>
<dbReference type="MEROPS" id="I02.062"/>
<dbReference type="GO" id="GO:0005615">
    <property type="term" value="C:extracellular space"/>
    <property type="evidence" value="ECO:0007669"/>
    <property type="project" value="TreeGrafter"/>
</dbReference>
<dbReference type="GO" id="GO:0004867">
    <property type="term" value="F:serine-type endopeptidase inhibitor activity"/>
    <property type="evidence" value="ECO:0007669"/>
    <property type="project" value="UniProtKB-KW"/>
</dbReference>
<dbReference type="CDD" id="cd22608">
    <property type="entry name" value="Kunitz_PPTI-like"/>
    <property type="match status" value="1"/>
</dbReference>
<dbReference type="FunFam" id="4.10.410.10:FF:000021">
    <property type="entry name" value="Serine protease inhibitor, putative"/>
    <property type="match status" value="1"/>
</dbReference>
<dbReference type="Gene3D" id="4.10.410.10">
    <property type="entry name" value="Pancreatic trypsin inhibitor Kunitz domain"/>
    <property type="match status" value="1"/>
</dbReference>
<dbReference type="InterPro" id="IPR002223">
    <property type="entry name" value="Kunitz_BPTI"/>
</dbReference>
<dbReference type="InterPro" id="IPR036880">
    <property type="entry name" value="Kunitz_BPTI_sf"/>
</dbReference>
<dbReference type="InterPro" id="IPR020901">
    <property type="entry name" value="Prtase_inh_Kunz-CS"/>
</dbReference>
<dbReference type="InterPro" id="IPR050098">
    <property type="entry name" value="TFPI/VKTCI-like"/>
</dbReference>
<dbReference type="PANTHER" id="PTHR10083:SF374">
    <property type="entry name" value="BPTI_KUNITZ INHIBITOR DOMAIN-CONTAINING PROTEIN"/>
    <property type="match status" value="1"/>
</dbReference>
<dbReference type="PANTHER" id="PTHR10083">
    <property type="entry name" value="KUNITZ-TYPE PROTEASE INHIBITOR-RELATED"/>
    <property type="match status" value="1"/>
</dbReference>
<dbReference type="Pfam" id="PF00014">
    <property type="entry name" value="Kunitz_BPTI"/>
    <property type="match status" value="1"/>
</dbReference>
<dbReference type="PRINTS" id="PR00759">
    <property type="entry name" value="BASICPTASE"/>
</dbReference>
<dbReference type="SMART" id="SM00131">
    <property type="entry name" value="KU"/>
    <property type="match status" value="1"/>
</dbReference>
<dbReference type="SUPFAM" id="SSF57362">
    <property type="entry name" value="BPTI-like"/>
    <property type="match status" value="1"/>
</dbReference>
<dbReference type="PROSITE" id="PS00280">
    <property type="entry name" value="BPTI_KUNITZ_1"/>
    <property type="match status" value="1"/>
</dbReference>
<dbReference type="PROSITE" id="PS50279">
    <property type="entry name" value="BPTI_KUNITZ_2"/>
    <property type="match status" value="1"/>
</dbReference>
<keyword id="KW-1015">Disulfide bond</keyword>
<keyword id="KW-0646">Protease inhibitor</keyword>
<keyword id="KW-0964">Secreted</keyword>
<keyword id="KW-0722">Serine protease inhibitor</keyword>
<keyword id="KW-0732">Signal</keyword>
<feature type="signal peptide" evidence="2">
    <location>
        <begin position="1"/>
        <end position="24"/>
    </location>
</feature>
<feature type="chain" id="PRO_5000666459" description="Kunitz-type serine protease inhibitor ki-VN">
    <location>
        <begin position="25"/>
        <end position="91"/>
    </location>
</feature>
<feature type="propeptide" id="PRO_5000666460" evidence="1">
    <location>
        <begin position="92"/>
        <end position="95"/>
    </location>
</feature>
<feature type="domain" description="BPTI/Kunitz inhibitor" evidence="3">
    <location>
        <begin position="31"/>
        <end position="81"/>
    </location>
</feature>
<feature type="site" description="Reactive bond" evidence="1">
    <location>
        <begin position="41"/>
        <end position="42"/>
    </location>
</feature>
<feature type="disulfide bond" evidence="3">
    <location>
        <begin position="31"/>
        <end position="81"/>
    </location>
</feature>
<feature type="disulfide bond" evidence="3">
    <location>
        <begin position="40"/>
        <end position="64"/>
    </location>
</feature>
<feature type="disulfide bond" evidence="3">
    <location>
        <begin position="56"/>
        <end position="77"/>
    </location>
</feature>
<comment type="function">
    <text evidence="1">Serine protease inhibitor.</text>
</comment>
<comment type="subcellular location">
    <subcellularLocation>
        <location evidence="1">Secreted</location>
    </subcellularLocation>
</comment>
<comment type="tissue specificity">
    <text>Expressed by the venom gland.</text>
</comment>
<comment type="similarity">
    <text evidence="4">Belongs to the venom Kunitz-type family.</text>
</comment>
<organism>
    <name type="scientific">Vipera nikolskii</name>
    <name type="common">Nikolsky's adder</name>
    <name type="synonym">Vipera berus nikolskii</name>
    <dbReference type="NCBI Taxonomy" id="1808362"/>
    <lineage>
        <taxon>Eukaryota</taxon>
        <taxon>Metazoa</taxon>
        <taxon>Chordata</taxon>
        <taxon>Craniata</taxon>
        <taxon>Vertebrata</taxon>
        <taxon>Euteleostomi</taxon>
        <taxon>Lepidosauria</taxon>
        <taxon>Squamata</taxon>
        <taxon>Bifurcata</taxon>
        <taxon>Unidentata</taxon>
        <taxon>Episquamata</taxon>
        <taxon>Toxicofera</taxon>
        <taxon>Serpentes</taxon>
        <taxon>Colubroidea</taxon>
        <taxon>Viperidae</taxon>
        <taxon>Viperinae</taxon>
        <taxon>Vipera</taxon>
    </lineage>
</organism>
<accession>E5AJX3</accession>